<keyword id="KW-0067">ATP-binding</keyword>
<keyword id="KW-0143">Chaperone</keyword>
<keyword id="KW-0963">Cytoplasm</keyword>
<keyword id="KW-0413">Isomerase</keyword>
<keyword id="KW-0547">Nucleotide-binding</keyword>
<keyword id="KW-1185">Reference proteome</keyword>
<organism>
    <name type="scientific">Fervidobacterium nodosum (strain ATCC 35602 / DSM 5306 / Rt17-B1)</name>
    <dbReference type="NCBI Taxonomy" id="381764"/>
    <lineage>
        <taxon>Bacteria</taxon>
        <taxon>Thermotogati</taxon>
        <taxon>Thermotogota</taxon>
        <taxon>Thermotogae</taxon>
        <taxon>Thermotogales</taxon>
        <taxon>Fervidobacteriaceae</taxon>
        <taxon>Fervidobacterium</taxon>
    </lineage>
</organism>
<accession>A7HNA3</accession>
<gene>
    <name evidence="1" type="primary">groEL</name>
    <name evidence="1" type="synonym">groL</name>
    <name type="ordered locus">Fnod_1543</name>
</gene>
<dbReference type="EC" id="5.6.1.7" evidence="1"/>
<dbReference type="EMBL" id="CP000771">
    <property type="protein sequence ID" value="ABS61386.1"/>
    <property type="molecule type" value="Genomic_DNA"/>
</dbReference>
<dbReference type="RefSeq" id="WP_011994691.1">
    <property type="nucleotide sequence ID" value="NC_009718.1"/>
</dbReference>
<dbReference type="SMR" id="A7HNA3"/>
<dbReference type="STRING" id="381764.Fnod_1543"/>
<dbReference type="KEGG" id="fno:Fnod_1543"/>
<dbReference type="eggNOG" id="COG0459">
    <property type="taxonomic scope" value="Bacteria"/>
</dbReference>
<dbReference type="HOGENOM" id="CLU_016503_3_0_0"/>
<dbReference type="OrthoDB" id="9766614at2"/>
<dbReference type="Proteomes" id="UP000002415">
    <property type="component" value="Chromosome"/>
</dbReference>
<dbReference type="GO" id="GO:0005737">
    <property type="term" value="C:cytoplasm"/>
    <property type="evidence" value="ECO:0007669"/>
    <property type="project" value="UniProtKB-SubCell"/>
</dbReference>
<dbReference type="GO" id="GO:0005524">
    <property type="term" value="F:ATP binding"/>
    <property type="evidence" value="ECO:0007669"/>
    <property type="project" value="UniProtKB-UniRule"/>
</dbReference>
<dbReference type="GO" id="GO:0140662">
    <property type="term" value="F:ATP-dependent protein folding chaperone"/>
    <property type="evidence" value="ECO:0007669"/>
    <property type="project" value="InterPro"/>
</dbReference>
<dbReference type="GO" id="GO:0016853">
    <property type="term" value="F:isomerase activity"/>
    <property type="evidence" value="ECO:0007669"/>
    <property type="project" value="UniProtKB-KW"/>
</dbReference>
<dbReference type="GO" id="GO:0051082">
    <property type="term" value="F:unfolded protein binding"/>
    <property type="evidence" value="ECO:0007669"/>
    <property type="project" value="UniProtKB-UniRule"/>
</dbReference>
<dbReference type="GO" id="GO:0042026">
    <property type="term" value="P:protein refolding"/>
    <property type="evidence" value="ECO:0007669"/>
    <property type="project" value="UniProtKB-UniRule"/>
</dbReference>
<dbReference type="CDD" id="cd03344">
    <property type="entry name" value="GroEL"/>
    <property type="match status" value="1"/>
</dbReference>
<dbReference type="FunFam" id="3.50.7.10:FF:000001">
    <property type="entry name" value="60 kDa chaperonin"/>
    <property type="match status" value="1"/>
</dbReference>
<dbReference type="Gene3D" id="3.50.7.10">
    <property type="entry name" value="GroEL"/>
    <property type="match status" value="1"/>
</dbReference>
<dbReference type="Gene3D" id="1.10.560.10">
    <property type="entry name" value="GroEL-like equatorial domain"/>
    <property type="match status" value="1"/>
</dbReference>
<dbReference type="Gene3D" id="3.30.260.10">
    <property type="entry name" value="TCP-1-like chaperonin intermediate domain"/>
    <property type="match status" value="1"/>
</dbReference>
<dbReference type="HAMAP" id="MF_00600">
    <property type="entry name" value="CH60"/>
    <property type="match status" value="1"/>
</dbReference>
<dbReference type="InterPro" id="IPR018370">
    <property type="entry name" value="Chaperonin_Cpn60_CS"/>
</dbReference>
<dbReference type="InterPro" id="IPR001844">
    <property type="entry name" value="Cpn60/GroEL"/>
</dbReference>
<dbReference type="InterPro" id="IPR002423">
    <property type="entry name" value="Cpn60/GroEL/TCP-1"/>
</dbReference>
<dbReference type="InterPro" id="IPR027409">
    <property type="entry name" value="GroEL-like_apical_dom_sf"/>
</dbReference>
<dbReference type="InterPro" id="IPR027413">
    <property type="entry name" value="GROEL-like_equatorial_sf"/>
</dbReference>
<dbReference type="InterPro" id="IPR027410">
    <property type="entry name" value="TCP-1-like_intermed_sf"/>
</dbReference>
<dbReference type="NCBIfam" id="TIGR02348">
    <property type="entry name" value="GroEL"/>
    <property type="match status" value="1"/>
</dbReference>
<dbReference type="NCBIfam" id="NF000592">
    <property type="entry name" value="PRK00013.1"/>
    <property type="match status" value="1"/>
</dbReference>
<dbReference type="NCBIfam" id="NF009487">
    <property type="entry name" value="PRK12849.1"/>
    <property type="match status" value="1"/>
</dbReference>
<dbReference type="NCBIfam" id="NF009488">
    <property type="entry name" value="PRK12850.1"/>
    <property type="match status" value="1"/>
</dbReference>
<dbReference type="NCBIfam" id="NF009489">
    <property type="entry name" value="PRK12851.1"/>
    <property type="match status" value="1"/>
</dbReference>
<dbReference type="PANTHER" id="PTHR45633">
    <property type="entry name" value="60 KDA HEAT SHOCK PROTEIN, MITOCHONDRIAL"/>
    <property type="match status" value="1"/>
</dbReference>
<dbReference type="Pfam" id="PF00118">
    <property type="entry name" value="Cpn60_TCP1"/>
    <property type="match status" value="1"/>
</dbReference>
<dbReference type="PRINTS" id="PR00298">
    <property type="entry name" value="CHAPERONIN60"/>
</dbReference>
<dbReference type="SUPFAM" id="SSF52029">
    <property type="entry name" value="GroEL apical domain-like"/>
    <property type="match status" value="1"/>
</dbReference>
<dbReference type="SUPFAM" id="SSF48592">
    <property type="entry name" value="GroEL equatorial domain-like"/>
    <property type="match status" value="1"/>
</dbReference>
<dbReference type="SUPFAM" id="SSF54849">
    <property type="entry name" value="GroEL-intermediate domain like"/>
    <property type="match status" value="1"/>
</dbReference>
<dbReference type="PROSITE" id="PS00296">
    <property type="entry name" value="CHAPERONINS_CPN60"/>
    <property type="match status" value="1"/>
</dbReference>
<feature type="chain" id="PRO_1000072631" description="Chaperonin GroEL">
    <location>
        <begin position="1"/>
        <end position="538"/>
    </location>
</feature>
<feature type="binding site" evidence="1">
    <location>
        <begin position="29"/>
        <end position="32"/>
    </location>
    <ligand>
        <name>ATP</name>
        <dbReference type="ChEBI" id="CHEBI:30616"/>
    </ligand>
</feature>
<feature type="binding site" evidence="1">
    <location>
        <begin position="86"/>
        <end position="90"/>
    </location>
    <ligand>
        <name>ATP</name>
        <dbReference type="ChEBI" id="CHEBI:30616"/>
    </ligand>
</feature>
<feature type="binding site" evidence="1">
    <location>
        <position position="413"/>
    </location>
    <ligand>
        <name>ATP</name>
        <dbReference type="ChEBI" id="CHEBI:30616"/>
    </ligand>
</feature>
<feature type="binding site" evidence="1">
    <location>
        <begin position="479"/>
        <end position="481"/>
    </location>
    <ligand>
        <name>ATP</name>
        <dbReference type="ChEBI" id="CHEBI:30616"/>
    </ligand>
</feature>
<feature type="binding site" evidence="1">
    <location>
        <position position="495"/>
    </location>
    <ligand>
        <name>ATP</name>
        <dbReference type="ChEBI" id="CHEBI:30616"/>
    </ligand>
</feature>
<protein>
    <recommendedName>
        <fullName evidence="1">Chaperonin GroEL</fullName>
        <ecNumber evidence="1">5.6.1.7</ecNumber>
    </recommendedName>
    <alternativeName>
        <fullName evidence="1">60 kDa chaperonin</fullName>
    </alternativeName>
    <alternativeName>
        <fullName evidence="1">Chaperonin-60</fullName>
        <shortName evidence="1">Cpn60</shortName>
    </alternativeName>
</protein>
<sequence length="538" mass="57983">MAKLLRYSEEARRSLEAGVDAVANAVKITLGPKGRNVVIEKSWGSPTITNDGVSIAKEIELEDKFANLGAQLVKEVASKTNDVAGDGTTTATVLAQAMIKEGLKMVAAGANPILIKKGIDKATSKVVEEIKKISKKLSSTEDIAHVASISANSEEIGKLIAEAMEKVGEDGVITVEDSKTIDTYVEFTEGMQFDRGYISPYFVTDPEKMEVVYNEPFILITDRKLSNVKPLIPILEKVAQTGRPLVIIAEDVEGEVLTTLVLNKLKGTLNTVAVKAPGFGDRRKAMLQDIAILTGGIVASEEVGINLEDLTLQDLGRADVVRVKKDETIIVGGKGKPEEIKKRVAQIKAQIEQTTSEYEKETLQERMAKLAGGVAVIKVGAATETELKEKKHRIEDALSATRAAVEEGIVPGGGITLLRARKVLEPVLNELTGDEKLGAQIVYNALEAPIRQIALNAGYDGAIIIHNVLSKDDVAYGFDALKGEYCNMYERGIIDPAKVTRSALQNAASIAGMLLTTEVLVVEKPEEKKPAAPEMPEY</sequence>
<evidence type="ECO:0000255" key="1">
    <source>
        <dbReference type="HAMAP-Rule" id="MF_00600"/>
    </source>
</evidence>
<name>CH60_FERNB</name>
<proteinExistence type="inferred from homology"/>
<reference key="1">
    <citation type="submission" date="2007-07" db="EMBL/GenBank/DDBJ databases">
        <title>Complete sequence of Fervidobacterium nodosum Rt17-B1.</title>
        <authorList>
            <consortium name="US DOE Joint Genome Institute"/>
            <person name="Copeland A."/>
            <person name="Lucas S."/>
            <person name="Lapidus A."/>
            <person name="Barry K."/>
            <person name="Glavina del Rio T."/>
            <person name="Dalin E."/>
            <person name="Tice H."/>
            <person name="Pitluck S."/>
            <person name="Saunders E."/>
            <person name="Brettin T."/>
            <person name="Bruce D."/>
            <person name="Detter J.C."/>
            <person name="Han C."/>
            <person name="Schmutz J."/>
            <person name="Larimer F."/>
            <person name="Land M."/>
            <person name="Hauser L."/>
            <person name="Kyrpides N."/>
            <person name="Mikhailova N."/>
            <person name="Nelson K."/>
            <person name="Gogarten J.P."/>
            <person name="Noll K."/>
            <person name="Richardson P."/>
        </authorList>
    </citation>
    <scope>NUCLEOTIDE SEQUENCE [LARGE SCALE GENOMIC DNA]</scope>
    <source>
        <strain>ATCC 35602 / DSM 5306 / Rt17-B1</strain>
    </source>
</reference>
<comment type="function">
    <text evidence="1">Together with its co-chaperonin GroES, plays an essential role in assisting protein folding. The GroEL-GroES system forms a nano-cage that allows encapsulation of the non-native substrate proteins and provides a physical environment optimized to promote and accelerate protein folding.</text>
</comment>
<comment type="catalytic activity">
    <reaction evidence="1">
        <text>ATP + H2O + a folded polypeptide = ADP + phosphate + an unfolded polypeptide.</text>
        <dbReference type="EC" id="5.6.1.7"/>
    </reaction>
</comment>
<comment type="subunit">
    <text evidence="1">Forms a cylinder of 14 subunits composed of two heptameric rings stacked back-to-back. Interacts with the co-chaperonin GroES.</text>
</comment>
<comment type="subcellular location">
    <subcellularLocation>
        <location evidence="1">Cytoplasm</location>
    </subcellularLocation>
</comment>
<comment type="similarity">
    <text evidence="1">Belongs to the chaperonin (HSP60) family.</text>
</comment>